<dbReference type="EMBL" id="AB018105">
    <property type="protein sequence ID" value="BAA33529.1"/>
    <property type="molecule type" value="Genomic_DNA"/>
</dbReference>
<dbReference type="SMR" id="O87196"/>
<dbReference type="eggNOG" id="COG2010">
    <property type="taxonomic scope" value="Bacteria"/>
</dbReference>
<dbReference type="UniPathway" id="UPA00705"/>
<dbReference type="GO" id="GO:0005886">
    <property type="term" value="C:plasma membrane"/>
    <property type="evidence" value="ECO:0007669"/>
    <property type="project" value="UniProtKB-SubCell"/>
</dbReference>
<dbReference type="GO" id="GO:0009055">
    <property type="term" value="F:electron transfer activity"/>
    <property type="evidence" value="ECO:0007669"/>
    <property type="project" value="InterPro"/>
</dbReference>
<dbReference type="GO" id="GO:0020037">
    <property type="term" value="F:heme binding"/>
    <property type="evidence" value="ECO:0007669"/>
    <property type="project" value="InterPro"/>
</dbReference>
<dbReference type="GO" id="GO:0046872">
    <property type="term" value="F:metal ion binding"/>
    <property type="evidence" value="ECO:0007669"/>
    <property type="project" value="UniProtKB-KW"/>
</dbReference>
<dbReference type="GO" id="GO:0016491">
    <property type="term" value="F:oxidoreductase activity"/>
    <property type="evidence" value="ECO:0007669"/>
    <property type="project" value="UniProtKB-KW"/>
</dbReference>
<dbReference type="GO" id="GO:0006119">
    <property type="term" value="P:oxidative phosphorylation"/>
    <property type="evidence" value="ECO:0007669"/>
    <property type="project" value="UniProtKB-UniPathway"/>
</dbReference>
<dbReference type="GO" id="GO:1902600">
    <property type="term" value="P:proton transmembrane transport"/>
    <property type="evidence" value="ECO:0007669"/>
    <property type="project" value="UniProtKB-KW"/>
</dbReference>
<dbReference type="Gene3D" id="6.10.280.130">
    <property type="match status" value="1"/>
</dbReference>
<dbReference type="Gene3D" id="1.10.760.10">
    <property type="entry name" value="Cytochrome c-like domain"/>
    <property type="match status" value="2"/>
</dbReference>
<dbReference type="InterPro" id="IPR032858">
    <property type="entry name" value="CcoP_N"/>
</dbReference>
<dbReference type="InterPro" id="IPR038414">
    <property type="entry name" value="CcoP_N_sf"/>
</dbReference>
<dbReference type="InterPro" id="IPR009056">
    <property type="entry name" value="Cyt_c-like_dom"/>
</dbReference>
<dbReference type="InterPro" id="IPR036909">
    <property type="entry name" value="Cyt_c-like_dom_sf"/>
</dbReference>
<dbReference type="InterPro" id="IPR004678">
    <property type="entry name" value="Cyt_c_oxidase_cbb3_su3"/>
</dbReference>
<dbReference type="InterPro" id="IPR050597">
    <property type="entry name" value="Cytochrome_c_Oxidase_Subunit"/>
</dbReference>
<dbReference type="NCBIfam" id="TIGR00782">
    <property type="entry name" value="ccoP"/>
    <property type="match status" value="1"/>
</dbReference>
<dbReference type="PANTHER" id="PTHR33751">
    <property type="entry name" value="CBB3-TYPE CYTOCHROME C OXIDASE SUBUNIT FIXP"/>
    <property type="match status" value="1"/>
</dbReference>
<dbReference type="PANTHER" id="PTHR33751:SF1">
    <property type="entry name" value="CBB3-TYPE CYTOCHROME C OXIDASE SUBUNIT FIXP"/>
    <property type="match status" value="1"/>
</dbReference>
<dbReference type="Pfam" id="PF13442">
    <property type="entry name" value="Cytochrome_CBB3"/>
    <property type="match status" value="2"/>
</dbReference>
<dbReference type="Pfam" id="PF14715">
    <property type="entry name" value="FixP_N"/>
    <property type="match status" value="1"/>
</dbReference>
<dbReference type="PIRSF" id="PIRSF000006">
    <property type="entry name" value="Cbb3-Cox_fixP"/>
    <property type="match status" value="1"/>
</dbReference>
<dbReference type="SUPFAM" id="SSF46626">
    <property type="entry name" value="Cytochrome c"/>
    <property type="match status" value="2"/>
</dbReference>
<dbReference type="PROSITE" id="PS51007">
    <property type="entry name" value="CYTC"/>
    <property type="match status" value="2"/>
</dbReference>
<reference evidence="9" key="1">
    <citation type="journal article" date="1999" name="J. Biochem.">
        <title>Characterization of a cb-type cytochrome c oxidase from Helicobacter pylori.</title>
        <authorList>
            <person name="Tsukita S."/>
            <person name="Koyanagi S."/>
            <person name="Nagata K."/>
            <person name="Koizuka H."/>
            <person name="Akashi H."/>
            <person name="Shimoyama T."/>
            <person name="Tamura T."/>
            <person name="Sone N."/>
        </authorList>
    </citation>
    <scope>NUCLEOTIDE SEQUENCE [GENOMIC DNA]</scope>
    <source>
        <strain evidence="9">HP206</strain>
    </source>
</reference>
<organism>
    <name type="scientific">Helicobacter pylori</name>
    <name type="common">Campylobacter pylori</name>
    <dbReference type="NCBI Taxonomy" id="210"/>
    <lineage>
        <taxon>Bacteria</taxon>
        <taxon>Pseudomonadati</taxon>
        <taxon>Campylobacterota</taxon>
        <taxon>Epsilonproteobacteria</taxon>
        <taxon>Campylobacterales</taxon>
        <taxon>Helicobacteraceae</taxon>
        <taxon>Helicobacter</taxon>
    </lineage>
</organism>
<gene>
    <name evidence="9" type="primary">ccoP</name>
</gene>
<keyword id="KW-0997">Cell inner membrane</keyword>
<keyword id="KW-1003">Cell membrane</keyword>
<keyword id="KW-0249">Electron transport</keyword>
<keyword id="KW-0349">Heme</keyword>
<keyword id="KW-0375">Hydrogen ion transport</keyword>
<keyword id="KW-0406">Ion transport</keyword>
<keyword id="KW-0408">Iron</keyword>
<keyword id="KW-0472">Membrane</keyword>
<keyword id="KW-0479">Metal-binding</keyword>
<keyword id="KW-0560">Oxidoreductase</keyword>
<keyword id="KW-0677">Repeat</keyword>
<keyword id="KW-0679">Respiratory chain</keyword>
<keyword id="KW-0812">Transmembrane</keyword>
<keyword id="KW-1133">Transmembrane helix</keyword>
<keyword id="KW-0813">Transport</keyword>
<evidence type="ECO:0000250" key="1">
    <source>
        <dbReference type="UniProtKB" id="D5ARP7"/>
    </source>
</evidence>
<evidence type="ECO:0000250" key="2">
    <source>
        <dbReference type="UniProtKB" id="D9IA45"/>
    </source>
</evidence>
<evidence type="ECO:0000250" key="3">
    <source>
        <dbReference type="UniProtKB" id="Q3J015"/>
    </source>
</evidence>
<evidence type="ECO:0000250" key="4">
    <source>
        <dbReference type="UniProtKB" id="Q52689"/>
    </source>
</evidence>
<evidence type="ECO:0000250" key="5">
    <source>
        <dbReference type="UniProtKB" id="Q8KS19"/>
    </source>
</evidence>
<evidence type="ECO:0000255" key="6"/>
<evidence type="ECO:0000255" key="7">
    <source>
        <dbReference type="PROSITE-ProRule" id="PRU00433"/>
    </source>
</evidence>
<evidence type="ECO:0000305" key="8"/>
<evidence type="ECO:0000312" key="9">
    <source>
        <dbReference type="EMBL" id="BAA33529.1"/>
    </source>
</evidence>
<proteinExistence type="inferred from homology"/>
<name>CCOP_HELPX</name>
<accession>O87196</accession>
<sequence length="292" mass="32571">MDFLNDHINVFGLIAALVILVLTIYESSSLIKEMRDSKSQGELMENGHLIDGIGEFANNVPVGWIASFMCTIVWAFWYFFFGYPLNSFSQIGQYNEEVKAHNQKFEAKWKNLGQKELVDMGQGIFLVHCSQCHGITAEGLHGSAQNLVRWGKEEGIMDTIKHGSKGMDYLAGEMPAMELDEKDAKAIASYVMAEISSVKKTKNPQLIDKGKELFESMGCTGCHGNDGKGLQENQVLAADLTTYGTENFLRNILTHGKKGNIGHMPSFKYKNFSDLQVKALPEFIQSLKPLED</sequence>
<protein>
    <recommendedName>
        <fullName evidence="1">Cbb3-type cytochrome c oxidase subunit CcoP</fullName>
        <shortName evidence="1">Cbb3-Cox subunit CcoP</shortName>
    </recommendedName>
    <alternativeName>
        <fullName evidence="4">C-type cytochrome CcoP</fullName>
        <shortName evidence="1">Cyt c(P)</shortName>
    </alternativeName>
    <alternativeName>
        <fullName evidence="9">Cytochrome c oxidase subunit III</fullName>
    </alternativeName>
</protein>
<comment type="function">
    <text evidence="1 2 3">C-type cytochrome. Part of the cbb3-type cytochrome c oxidase complex. CcoP subunit is required for transferring electrons from donor cytochrome c via its heme groups to CcoO subunit. From there, electrons are shuttled to the catalytic binuclear center of CcoN subunit where oxygen reduction takes place. The complex also functions as a proton pump (By similarity).</text>
</comment>
<comment type="cofactor">
    <cofactor evidence="2">
        <name>heme c</name>
        <dbReference type="ChEBI" id="CHEBI:61717"/>
    </cofactor>
    <text evidence="2">Binds 2 heme C groups per subunit.</text>
</comment>
<comment type="pathway">
    <text evidence="1">Energy metabolism; oxidative phosphorylation.</text>
</comment>
<comment type="subunit">
    <text evidence="1">Component of the cbb3-type cytochrome c oxidase at least composed of CcoN, CcoO, CcoQ and CcoP.</text>
</comment>
<comment type="subcellular location">
    <subcellularLocation>
        <location evidence="5 6">Cell inner membrane</location>
        <topology evidence="5 6">Multi-pass membrane protein</topology>
    </subcellularLocation>
</comment>
<comment type="similarity">
    <text evidence="8">Belongs to the CcoP / FixP family.</text>
</comment>
<feature type="chain" id="PRO_0000412284" description="Cbb3-type cytochrome c oxidase subunit CcoP">
    <location>
        <begin position="1"/>
        <end position="292"/>
    </location>
</feature>
<feature type="transmembrane region" description="Helical" evidence="6">
    <location>
        <begin position="11"/>
        <end position="31"/>
    </location>
</feature>
<feature type="transmembrane region" description="Helical" evidence="6">
    <location>
        <begin position="62"/>
        <end position="82"/>
    </location>
</feature>
<feature type="domain" description="Cytochrome c 1" evidence="7">
    <location>
        <begin position="116"/>
        <end position="195"/>
    </location>
</feature>
<feature type="domain" description="Cytochrome c 2" evidence="7">
    <location>
        <begin position="205"/>
        <end position="288"/>
    </location>
</feature>
<feature type="binding site" description="covalent" evidence="2">
    <location>
        <position position="129"/>
    </location>
    <ligand>
        <name>heme c</name>
        <dbReference type="ChEBI" id="CHEBI:61717"/>
        <label>1</label>
    </ligand>
</feature>
<feature type="binding site" description="covalent" evidence="2">
    <location>
        <position position="132"/>
    </location>
    <ligand>
        <name>heme c</name>
        <dbReference type="ChEBI" id="CHEBI:61717"/>
        <label>1</label>
    </ligand>
</feature>
<feature type="binding site" description="axial binding residue" evidence="2">
    <location>
        <position position="133"/>
    </location>
    <ligand>
        <name>heme c</name>
        <dbReference type="ChEBI" id="CHEBI:61717"/>
        <label>1</label>
    </ligand>
    <ligandPart>
        <name>Fe</name>
        <dbReference type="ChEBI" id="CHEBI:18248"/>
    </ligandPart>
</feature>
<feature type="binding site" description="axial binding residue" evidence="2">
    <location>
        <position position="174"/>
    </location>
    <ligand>
        <name>heme c</name>
        <dbReference type="ChEBI" id="CHEBI:61717"/>
        <label>2</label>
    </ligand>
    <ligandPart>
        <name>Fe</name>
        <dbReference type="ChEBI" id="CHEBI:18248"/>
    </ligandPart>
</feature>
<feature type="binding site" description="covalent" evidence="2">
    <location>
        <position position="219"/>
    </location>
    <ligand>
        <name>heme c</name>
        <dbReference type="ChEBI" id="CHEBI:61717"/>
        <label>2</label>
    </ligand>
</feature>
<feature type="binding site" description="covalent" evidence="2">
    <location>
        <position position="222"/>
    </location>
    <ligand>
        <name>heme c</name>
        <dbReference type="ChEBI" id="CHEBI:61717"/>
        <label>2</label>
    </ligand>
</feature>
<feature type="binding site" description="axial binding residue" evidence="2">
    <location>
        <position position="223"/>
    </location>
    <ligand>
        <name>heme c</name>
        <dbReference type="ChEBI" id="CHEBI:61717"/>
        <label>2</label>
    </ligand>
    <ligandPart>
        <name>Fe</name>
        <dbReference type="ChEBI" id="CHEBI:18248"/>
    </ligandPart>
</feature>
<feature type="binding site" description="axial binding residue" evidence="2">
    <location>
        <position position="264"/>
    </location>
    <ligand>
        <name>heme c</name>
        <dbReference type="ChEBI" id="CHEBI:61717"/>
        <label>1</label>
    </ligand>
    <ligandPart>
        <name>Fe</name>
        <dbReference type="ChEBI" id="CHEBI:18248"/>
    </ligandPart>
</feature>